<feature type="initiator methionine" description="Removed" evidence="1">
    <location>
        <position position="1"/>
    </location>
</feature>
<feature type="chain" id="PRO_0000091233" description="Elongation factor G">
    <location>
        <begin position="2"/>
        <end position="692"/>
    </location>
</feature>
<feature type="domain" description="tr-type G">
    <location>
        <begin position="8"/>
        <end position="282"/>
    </location>
</feature>
<feature type="binding site" evidence="1">
    <location>
        <begin position="17"/>
        <end position="24"/>
    </location>
    <ligand>
        <name>GTP</name>
        <dbReference type="ChEBI" id="CHEBI:37565"/>
    </ligand>
</feature>
<feature type="binding site" evidence="1">
    <location>
        <begin position="81"/>
        <end position="85"/>
    </location>
    <ligand>
        <name>GTP</name>
        <dbReference type="ChEBI" id="CHEBI:37565"/>
    </ligand>
</feature>
<feature type="binding site" evidence="1">
    <location>
        <begin position="135"/>
        <end position="138"/>
    </location>
    <ligand>
        <name>GTP</name>
        <dbReference type="ChEBI" id="CHEBI:37565"/>
    </ligand>
</feature>
<protein>
    <recommendedName>
        <fullName>Elongation factor G</fullName>
        <shortName>EF-G</shortName>
    </recommendedName>
</protein>
<comment type="function">
    <text evidence="1">Catalyzes the GTP-dependent ribosomal translocation step during translation elongation. During this step, the ribosome changes from the pre-translocational (PRE) to the post-translocational (POST) state as the newly formed A-site-bound peptidyl-tRNA and P-site-bound deacylated tRNA move to the P and E sites, respectively. Catalyzes the coordinated movement of the two tRNA molecules, the mRNA and conformational changes in the ribosome (By similarity).</text>
</comment>
<comment type="subcellular location">
    <subcellularLocation>
        <location evidence="1">Cytoplasm</location>
    </subcellularLocation>
</comment>
<comment type="similarity">
    <text evidence="2">Belongs to the TRAFAC class translation factor GTPase superfamily. Classic translation factor GTPase family. EF-G/EF-2 subfamily.</text>
</comment>
<proteinExistence type="inferred from homology"/>
<accession>P0DA84</accession>
<accession>P69947</accession>
<accession>P82477</accession>
<name>EFG_STRP3</name>
<keyword id="KW-0963">Cytoplasm</keyword>
<keyword id="KW-0251">Elongation factor</keyword>
<keyword id="KW-0342">GTP-binding</keyword>
<keyword id="KW-0547">Nucleotide-binding</keyword>
<keyword id="KW-0648">Protein biosynthesis</keyword>
<sequence>MAREFSLAKTRNIGIMAHVDAGKTTTTERILYYTGKIHKIGETHEGASQMDWMEQEQERGITITSAATTAQWDGHRVNIIDTPGHVDFTIEVQRSLRVLDGAVTVLDSQSGVEPQTETVWRQATEYGVPRIVFANKMDKIGADFLYSVQTLHDRLQANAHPIQLPIGAEDDFRGIIDLIKMKAEIYTNDLGTDILEEDIPEEYLEQAQEYREKLIEAVAETDEDLMMKYLEGEEITNDELIAGIRKATINVEFFPVLCGSAFKNKGVQLMLDAVIAYLPSPLDIPAIKGVNPDTDAEEERPASDEEPFAALAFKIMTDPFVGRLTFFRVYSGVLNSGSYVMNTSKGKRERIGRILQMHANSRQEIETVYAGDIAAAVGLKDTTTGDSLTDEKAKVILESIEVPEPVIQLMVEPKSKADQDKMGVALQKLAEEDPTFRVETNVETGETVIAGMGELHLDVLVDRMKREFKVEANVGAPQVSYRETFRASTQARGFFKRQSGGKGQFGDVWIEFTPNEEGKGFEFENAIVGGVVPREFIPAVEKGLIESMANGVLAGYPMVDVKAKLYDGSYHDVDSSETAFKIAASLALKEAAKSAQPAILEPMMLVTITAPEDNLGDVMGHVTARRGRVDGMEAHGNSQIVRAYVPLAEMFGYATVLRSATQGRGTFMMVFDHYEDVPKSVQEEIIKKNKGE</sequence>
<dbReference type="EMBL" id="AE014074">
    <property type="protein sequence ID" value="AAM78807.1"/>
    <property type="molecule type" value="Genomic_DNA"/>
</dbReference>
<dbReference type="RefSeq" id="WP_002986045.1">
    <property type="nucleotide sequence ID" value="NC_004070.1"/>
</dbReference>
<dbReference type="SMR" id="P0DA84"/>
<dbReference type="GeneID" id="69900199"/>
<dbReference type="KEGG" id="spg:SpyM3_0200"/>
<dbReference type="HOGENOM" id="CLU_002794_4_1_9"/>
<dbReference type="Proteomes" id="UP000000564">
    <property type="component" value="Chromosome"/>
</dbReference>
<dbReference type="GO" id="GO:0005737">
    <property type="term" value="C:cytoplasm"/>
    <property type="evidence" value="ECO:0007669"/>
    <property type="project" value="UniProtKB-SubCell"/>
</dbReference>
<dbReference type="GO" id="GO:0005525">
    <property type="term" value="F:GTP binding"/>
    <property type="evidence" value="ECO:0007669"/>
    <property type="project" value="UniProtKB-UniRule"/>
</dbReference>
<dbReference type="GO" id="GO:0003924">
    <property type="term" value="F:GTPase activity"/>
    <property type="evidence" value="ECO:0007669"/>
    <property type="project" value="InterPro"/>
</dbReference>
<dbReference type="GO" id="GO:0003746">
    <property type="term" value="F:translation elongation factor activity"/>
    <property type="evidence" value="ECO:0007669"/>
    <property type="project" value="UniProtKB-UniRule"/>
</dbReference>
<dbReference type="GO" id="GO:0032790">
    <property type="term" value="P:ribosome disassembly"/>
    <property type="evidence" value="ECO:0007669"/>
    <property type="project" value="TreeGrafter"/>
</dbReference>
<dbReference type="CDD" id="cd01886">
    <property type="entry name" value="EF-G"/>
    <property type="match status" value="1"/>
</dbReference>
<dbReference type="CDD" id="cd16262">
    <property type="entry name" value="EFG_III"/>
    <property type="match status" value="1"/>
</dbReference>
<dbReference type="CDD" id="cd01434">
    <property type="entry name" value="EFG_mtEFG1_IV"/>
    <property type="match status" value="1"/>
</dbReference>
<dbReference type="CDD" id="cd03713">
    <property type="entry name" value="EFG_mtEFG_C"/>
    <property type="match status" value="1"/>
</dbReference>
<dbReference type="CDD" id="cd04088">
    <property type="entry name" value="EFG_mtEFG_II"/>
    <property type="match status" value="1"/>
</dbReference>
<dbReference type="FunFam" id="2.40.30.10:FF:000006">
    <property type="entry name" value="Elongation factor G"/>
    <property type="match status" value="1"/>
</dbReference>
<dbReference type="FunFam" id="3.30.230.10:FF:000003">
    <property type="entry name" value="Elongation factor G"/>
    <property type="match status" value="1"/>
</dbReference>
<dbReference type="FunFam" id="3.30.70.240:FF:000001">
    <property type="entry name" value="Elongation factor G"/>
    <property type="match status" value="1"/>
</dbReference>
<dbReference type="FunFam" id="3.30.70.870:FF:000001">
    <property type="entry name" value="Elongation factor G"/>
    <property type="match status" value="1"/>
</dbReference>
<dbReference type="FunFam" id="3.40.50.300:FF:000029">
    <property type="entry name" value="Elongation factor G"/>
    <property type="match status" value="1"/>
</dbReference>
<dbReference type="Gene3D" id="3.30.230.10">
    <property type="match status" value="1"/>
</dbReference>
<dbReference type="Gene3D" id="3.30.70.240">
    <property type="match status" value="1"/>
</dbReference>
<dbReference type="Gene3D" id="3.30.70.870">
    <property type="entry name" value="Elongation Factor G (Translational Gtpase), domain 3"/>
    <property type="match status" value="1"/>
</dbReference>
<dbReference type="Gene3D" id="3.40.50.300">
    <property type="entry name" value="P-loop containing nucleotide triphosphate hydrolases"/>
    <property type="match status" value="1"/>
</dbReference>
<dbReference type="Gene3D" id="2.40.30.10">
    <property type="entry name" value="Translation factors"/>
    <property type="match status" value="1"/>
</dbReference>
<dbReference type="HAMAP" id="MF_00054_B">
    <property type="entry name" value="EF_G_EF_2_B"/>
    <property type="match status" value="1"/>
</dbReference>
<dbReference type="InterPro" id="IPR041095">
    <property type="entry name" value="EFG_II"/>
</dbReference>
<dbReference type="InterPro" id="IPR009022">
    <property type="entry name" value="EFG_III"/>
</dbReference>
<dbReference type="InterPro" id="IPR035647">
    <property type="entry name" value="EFG_III/V"/>
</dbReference>
<dbReference type="InterPro" id="IPR047872">
    <property type="entry name" value="EFG_IV"/>
</dbReference>
<dbReference type="InterPro" id="IPR035649">
    <property type="entry name" value="EFG_V"/>
</dbReference>
<dbReference type="InterPro" id="IPR000640">
    <property type="entry name" value="EFG_V-like"/>
</dbReference>
<dbReference type="InterPro" id="IPR004161">
    <property type="entry name" value="EFTu-like_2"/>
</dbReference>
<dbReference type="InterPro" id="IPR031157">
    <property type="entry name" value="G_TR_CS"/>
</dbReference>
<dbReference type="InterPro" id="IPR027417">
    <property type="entry name" value="P-loop_NTPase"/>
</dbReference>
<dbReference type="InterPro" id="IPR020568">
    <property type="entry name" value="Ribosomal_Su5_D2-typ_SF"/>
</dbReference>
<dbReference type="InterPro" id="IPR014721">
    <property type="entry name" value="Ribsml_uS5_D2-typ_fold_subgr"/>
</dbReference>
<dbReference type="InterPro" id="IPR005225">
    <property type="entry name" value="Small_GTP-bd"/>
</dbReference>
<dbReference type="InterPro" id="IPR000795">
    <property type="entry name" value="T_Tr_GTP-bd_dom"/>
</dbReference>
<dbReference type="InterPro" id="IPR009000">
    <property type="entry name" value="Transl_B-barrel_sf"/>
</dbReference>
<dbReference type="InterPro" id="IPR004540">
    <property type="entry name" value="Transl_elong_EFG/EF2"/>
</dbReference>
<dbReference type="InterPro" id="IPR005517">
    <property type="entry name" value="Transl_elong_EFG/EF2_IV"/>
</dbReference>
<dbReference type="NCBIfam" id="TIGR00484">
    <property type="entry name" value="EF-G"/>
    <property type="match status" value="1"/>
</dbReference>
<dbReference type="NCBIfam" id="NF009379">
    <property type="entry name" value="PRK12740.1-3"/>
    <property type="match status" value="1"/>
</dbReference>
<dbReference type="NCBIfam" id="NF009381">
    <property type="entry name" value="PRK12740.1-5"/>
    <property type="match status" value="1"/>
</dbReference>
<dbReference type="NCBIfam" id="TIGR00231">
    <property type="entry name" value="small_GTP"/>
    <property type="match status" value="1"/>
</dbReference>
<dbReference type="PANTHER" id="PTHR43261:SF1">
    <property type="entry name" value="RIBOSOME-RELEASING FACTOR 2, MITOCHONDRIAL"/>
    <property type="match status" value="1"/>
</dbReference>
<dbReference type="PANTHER" id="PTHR43261">
    <property type="entry name" value="TRANSLATION ELONGATION FACTOR G-RELATED"/>
    <property type="match status" value="1"/>
</dbReference>
<dbReference type="Pfam" id="PF00679">
    <property type="entry name" value="EFG_C"/>
    <property type="match status" value="1"/>
</dbReference>
<dbReference type="Pfam" id="PF14492">
    <property type="entry name" value="EFG_III"/>
    <property type="match status" value="1"/>
</dbReference>
<dbReference type="Pfam" id="PF03764">
    <property type="entry name" value="EFG_IV"/>
    <property type="match status" value="1"/>
</dbReference>
<dbReference type="Pfam" id="PF00009">
    <property type="entry name" value="GTP_EFTU"/>
    <property type="match status" value="1"/>
</dbReference>
<dbReference type="Pfam" id="PF03144">
    <property type="entry name" value="GTP_EFTU_D2"/>
    <property type="match status" value="1"/>
</dbReference>
<dbReference type="PRINTS" id="PR00315">
    <property type="entry name" value="ELONGATNFCT"/>
</dbReference>
<dbReference type="SMART" id="SM00838">
    <property type="entry name" value="EFG_C"/>
    <property type="match status" value="1"/>
</dbReference>
<dbReference type="SMART" id="SM00889">
    <property type="entry name" value="EFG_IV"/>
    <property type="match status" value="1"/>
</dbReference>
<dbReference type="SUPFAM" id="SSF54980">
    <property type="entry name" value="EF-G C-terminal domain-like"/>
    <property type="match status" value="2"/>
</dbReference>
<dbReference type="SUPFAM" id="SSF52540">
    <property type="entry name" value="P-loop containing nucleoside triphosphate hydrolases"/>
    <property type="match status" value="1"/>
</dbReference>
<dbReference type="SUPFAM" id="SSF54211">
    <property type="entry name" value="Ribosomal protein S5 domain 2-like"/>
    <property type="match status" value="1"/>
</dbReference>
<dbReference type="SUPFAM" id="SSF50447">
    <property type="entry name" value="Translation proteins"/>
    <property type="match status" value="1"/>
</dbReference>
<dbReference type="PROSITE" id="PS00301">
    <property type="entry name" value="G_TR_1"/>
    <property type="match status" value="1"/>
</dbReference>
<dbReference type="PROSITE" id="PS51722">
    <property type="entry name" value="G_TR_2"/>
    <property type="match status" value="1"/>
</dbReference>
<evidence type="ECO:0000250" key="1"/>
<evidence type="ECO:0000305" key="2"/>
<organism>
    <name type="scientific">Streptococcus pyogenes serotype M3 (strain ATCC BAA-595 / MGAS315)</name>
    <dbReference type="NCBI Taxonomy" id="198466"/>
    <lineage>
        <taxon>Bacteria</taxon>
        <taxon>Bacillati</taxon>
        <taxon>Bacillota</taxon>
        <taxon>Bacilli</taxon>
        <taxon>Lactobacillales</taxon>
        <taxon>Streptococcaceae</taxon>
        <taxon>Streptococcus</taxon>
    </lineage>
</organism>
<reference key="1">
    <citation type="journal article" date="2002" name="Proc. Natl. Acad. Sci. U.S.A.">
        <title>Genome sequence of a serotype M3 strain of group A Streptococcus: phage-encoded toxins, the high-virulence phenotype, and clone emergence.</title>
        <authorList>
            <person name="Beres S.B."/>
            <person name="Sylva G.L."/>
            <person name="Barbian K.D."/>
            <person name="Lei B."/>
            <person name="Hoff J.S."/>
            <person name="Mammarella N.D."/>
            <person name="Liu M.-Y."/>
            <person name="Smoot J.C."/>
            <person name="Porcella S.F."/>
            <person name="Parkins L.D."/>
            <person name="Campbell D.S."/>
            <person name="Smith T.M."/>
            <person name="McCormick J.K."/>
            <person name="Leung D.Y.M."/>
            <person name="Schlievert P.M."/>
            <person name="Musser J.M."/>
        </authorList>
    </citation>
    <scope>NUCLEOTIDE SEQUENCE [LARGE SCALE GENOMIC DNA]</scope>
    <source>
        <strain>ATCC BAA-595 / MGAS315</strain>
    </source>
</reference>
<gene>
    <name type="primary">fus</name>
    <name type="synonym">fusA</name>
    <name type="ordered locus">SpyM3_0200</name>
</gene>